<reference key="1">
    <citation type="journal article" date="2006" name="Genome Biol.">
        <title>Genomic analysis reveals that Pseudomonas aeruginosa virulence is combinatorial.</title>
        <authorList>
            <person name="Lee D.G."/>
            <person name="Urbach J.M."/>
            <person name="Wu G."/>
            <person name="Liberati N.T."/>
            <person name="Feinbaum R.L."/>
            <person name="Miyata S."/>
            <person name="Diggins L.T."/>
            <person name="He J."/>
            <person name="Saucier M."/>
            <person name="Deziel E."/>
            <person name="Friedman L."/>
            <person name="Li L."/>
            <person name="Grills G."/>
            <person name="Montgomery K."/>
            <person name="Kucherlapati R."/>
            <person name="Rahme L.G."/>
            <person name="Ausubel F.M."/>
        </authorList>
    </citation>
    <scope>NUCLEOTIDE SEQUENCE [LARGE SCALE GENOMIC DNA]</scope>
    <source>
        <strain>UCBPP-PA14</strain>
    </source>
</reference>
<reference key="2">
    <citation type="journal article" date="2014" name="Anal. Bioanal. Chem.">
        <title>Potential of liquid-isoelectric-focusing protein fractionation to improve phosphoprotein characterization of Pseudomonas aeruginosa PA14.</title>
        <authorList>
            <person name="Ouidir T."/>
            <person name="Jarnier F."/>
            <person name="Cosette P."/>
            <person name="Jouenne T."/>
            <person name="Hardouin J."/>
        </authorList>
    </citation>
    <scope>IDENTIFICATION BY MASS SPECTROMETRY</scope>
    <scope>PHOSPHORYLATION AT THR-421</scope>
    <source>
        <strain>UCBPP-PA14</strain>
    </source>
</reference>
<name>GAP2_PSEAB</name>
<organism>
    <name type="scientific">Pseudomonas aeruginosa (strain UCBPP-PA14)</name>
    <dbReference type="NCBI Taxonomy" id="208963"/>
    <lineage>
        <taxon>Bacteria</taxon>
        <taxon>Pseudomonadati</taxon>
        <taxon>Pseudomonadota</taxon>
        <taxon>Gammaproteobacteria</taxon>
        <taxon>Pseudomonadales</taxon>
        <taxon>Pseudomonadaceae</taxon>
        <taxon>Pseudomonas</taxon>
    </lineage>
</organism>
<protein>
    <recommendedName>
        <fullName evidence="2">Glyceraldehyde-3-phosphate dehydrogenase-like protein</fullName>
        <ecNumber evidence="2">1.2.1.-</ecNumber>
    </recommendedName>
</protein>
<evidence type="ECO:0000255" key="1">
    <source>
        <dbReference type="RuleBase" id="RU000397"/>
    </source>
</evidence>
<evidence type="ECO:0000255" key="2">
    <source>
        <dbReference type="RuleBase" id="RU361160"/>
    </source>
</evidence>
<evidence type="ECO:0000269" key="3">
    <source>
    </source>
</evidence>
<feature type="chain" id="PRO_0000431468" description="Glyceraldehyde-3-phosphate dehydrogenase-like protein">
    <location>
        <begin position="1"/>
        <end position="461"/>
    </location>
</feature>
<feature type="modified residue" description="Phosphothreonine" evidence="3">
    <location>
        <position position="421"/>
    </location>
</feature>
<dbReference type="EC" id="1.2.1.-" evidence="2"/>
<dbReference type="EMBL" id="CP000438">
    <property type="protein sequence ID" value="ABJ12239.1"/>
    <property type="molecule type" value="Genomic_DNA"/>
</dbReference>
<dbReference type="SMR" id="Q02PG5"/>
<dbReference type="iPTMnet" id="Q02PG5"/>
<dbReference type="KEGG" id="pau:PA14_25250"/>
<dbReference type="HOGENOM" id="CLU_030140_1_2_6"/>
<dbReference type="Proteomes" id="UP000000653">
    <property type="component" value="Chromosome"/>
</dbReference>
<dbReference type="GO" id="GO:0051287">
    <property type="term" value="F:NAD binding"/>
    <property type="evidence" value="ECO:0007669"/>
    <property type="project" value="InterPro"/>
</dbReference>
<dbReference type="GO" id="GO:0050661">
    <property type="term" value="F:NADP binding"/>
    <property type="evidence" value="ECO:0007669"/>
    <property type="project" value="InterPro"/>
</dbReference>
<dbReference type="GO" id="GO:0016620">
    <property type="term" value="F:oxidoreductase activity, acting on the aldehyde or oxo group of donors, NAD or NADP as acceptor"/>
    <property type="evidence" value="ECO:0007669"/>
    <property type="project" value="InterPro"/>
</dbReference>
<dbReference type="GO" id="GO:0006006">
    <property type="term" value="P:glucose metabolic process"/>
    <property type="evidence" value="ECO:0007669"/>
    <property type="project" value="InterPro"/>
</dbReference>
<dbReference type="CDD" id="cd05214">
    <property type="entry name" value="GAPDH_I_N"/>
    <property type="match status" value="1"/>
</dbReference>
<dbReference type="Gene3D" id="3.30.360.10">
    <property type="entry name" value="Dihydrodipicolinate Reductase, domain 2"/>
    <property type="match status" value="1"/>
</dbReference>
<dbReference type="Gene3D" id="3.40.50.720">
    <property type="entry name" value="NAD(P)-binding Rossmann-like Domain"/>
    <property type="match status" value="1"/>
</dbReference>
<dbReference type="InterPro" id="IPR020831">
    <property type="entry name" value="GlycerAld/Erythrose_P_DH"/>
</dbReference>
<dbReference type="InterPro" id="IPR020830">
    <property type="entry name" value="GlycerAld_3-P_DH_AS"/>
</dbReference>
<dbReference type="InterPro" id="IPR020829">
    <property type="entry name" value="GlycerAld_3-P_DH_cat"/>
</dbReference>
<dbReference type="InterPro" id="IPR020828">
    <property type="entry name" value="GlycerAld_3-P_DH_NAD(P)-bd"/>
</dbReference>
<dbReference type="InterPro" id="IPR006424">
    <property type="entry name" value="Glyceraldehyde-3-P_DH_1"/>
</dbReference>
<dbReference type="InterPro" id="IPR036291">
    <property type="entry name" value="NAD(P)-bd_dom_sf"/>
</dbReference>
<dbReference type="NCBIfam" id="TIGR01534">
    <property type="entry name" value="GAPDH-I"/>
    <property type="match status" value="1"/>
</dbReference>
<dbReference type="NCBIfam" id="NF006139">
    <property type="entry name" value="PRK08289.1"/>
    <property type="match status" value="1"/>
</dbReference>
<dbReference type="PANTHER" id="PTHR43454:SF1">
    <property type="entry name" value="GLYCERALDEHYDE 3-PHOSPHATE DEHYDROGENASE NAD(P) BINDING DOMAIN-CONTAINING PROTEIN"/>
    <property type="match status" value="1"/>
</dbReference>
<dbReference type="PANTHER" id="PTHR43454">
    <property type="entry name" value="GLYCERALDEHYDE-3-PHOSPHATE DEHYDROGENASE"/>
    <property type="match status" value="1"/>
</dbReference>
<dbReference type="Pfam" id="PF02800">
    <property type="entry name" value="Gp_dh_C"/>
    <property type="match status" value="1"/>
</dbReference>
<dbReference type="Pfam" id="PF00044">
    <property type="entry name" value="Gp_dh_N"/>
    <property type="match status" value="1"/>
</dbReference>
<dbReference type="PRINTS" id="PR00078">
    <property type="entry name" value="G3PDHDRGNASE"/>
</dbReference>
<dbReference type="SMART" id="SM00846">
    <property type="entry name" value="Gp_dh_N"/>
    <property type="match status" value="1"/>
</dbReference>
<dbReference type="SUPFAM" id="SSF55347">
    <property type="entry name" value="Glyceraldehyde-3-phosphate dehydrogenase-like, C-terminal domain"/>
    <property type="match status" value="1"/>
</dbReference>
<dbReference type="SUPFAM" id="SSF51735">
    <property type="entry name" value="NAD(P)-binding Rossmann-fold domains"/>
    <property type="match status" value="1"/>
</dbReference>
<dbReference type="PROSITE" id="PS00071">
    <property type="entry name" value="GAPDH"/>
    <property type="match status" value="1"/>
</dbReference>
<proteinExistence type="evidence at protein level"/>
<comment type="similarity">
    <text evidence="1">Belongs to the glyceraldehyde-3-phosphate dehydrogenase family.</text>
</comment>
<sequence length="461" mass="50082">MIPLIGQLYRNNNVVTSIHGRGLINRSVIAIMKAHRFARHRMADDAELSVHETFPILKAMSELKLGAASVDLGKMVAKFKAEGNGRSIEDFVKAELAEVAGKQNGDAREGTDVVLYGFGRIGRLLARILIEKTGGGDGLRLRAIVVRKGAENDLVKRASLLRRDSVHGPFDGTITIDEENNTLTANGNLIQVIYSNDPASIDYTQYGIKNALLVDNTGKWRDAEGLGQHLKCPGIDRVVLTAPGKGALKNIVHGINHTDIGADDKIISAASCTTNAIVPVLKAVNDQYGIVNGHVETVHSYTNDQNLIDNFHKGSRRGRSAPLNMVITKTGAATAAAKALPVLKGKLTGNAIRVPTPNVSMAILNLNLEKATTREEINEYLRQMAMHSDLQKQIDFVSSQEVVSTDFVGSRHAGVVDAEATICNDNRVVLYVWYDNEFGYSCQVVRVMEDMAGVNPPAFPR</sequence>
<keyword id="KW-0520">NAD</keyword>
<keyword id="KW-0560">Oxidoreductase</keyword>
<keyword id="KW-0597">Phosphoprotein</keyword>
<gene>
    <name type="primary">gap2</name>
    <name type="synonym">gapA</name>
    <name type="ordered locus">PA14_25250</name>
</gene>
<accession>Q02PG5</accession>